<organism>
    <name type="scientific">Acinetobacter calcoaceticus</name>
    <dbReference type="NCBI Taxonomy" id="471"/>
    <lineage>
        <taxon>Bacteria</taxon>
        <taxon>Pseudomonadati</taxon>
        <taxon>Pseudomonadota</taxon>
        <taxon>Gammaproteobacteria</taxon>
        <taxon>Moraxellales</taxon>
        <taxon>Moraxellaceae</taxon>
        <taxon>Acinetobacter</taxon>
        <taxon>Acinetobacter calcoaceticus/baumannii complex</taxon>
    </lineage>
</organism>
<proteinExistence type="evidence at protein level"/>
<name>DHGB_ACICA</name>
<reference key="1">
    <citation type="journal article" date="1989" name="Mol. Gen. Genet.">
        <title>Cloning, characterization and DNA sequencing of the gene encoding the Mr 50,000 quinoprotein glucose dehydrogenase from Acinetobacter calcoaceticus.</title>
        <authorList>
            <person name="Cleton-Jansen A.-M."/>
            <person name="Goosen N."/>
            <person name="Vink K."/>
            <person name="van de Putte P."/>
        </authorList>
    </citation>
    <scope>NUCLEOTIDE SEQUENCE [GENOMIC DNA]</scope>
    <source>
        <strain>PP2403</strain>
        <strain>PP2407</strain>
        <strain>PP2410</strain>
    </source>
</reference>
<reference key="2">
    <citation type="journal article" date="1999" name="J. Mol. Biol.">
        <title>The 1.7 A crystal structure of the apo form of the soluble quinoprotein glucose dehydrogenase from Acinetobacter calcoaceticus reveals a novel internal conserved sequence repeat.</title>
        <authorList>
            <person name="Oubrie A."/>
            <person name="Rozeboom H.J."/>
            <person name="Kalk K.H."/>
            <person name="Duine J.A."/>
            <person name="Dijkstra B.W."/>
        </authorList>
    </citation>
    <scope>X-RAY CRYSTALLOGRAPHY (1.72 ANGSTROMS) IN COMPLEX WITH CALCIUM IONS</scope>
    <scope>SUBUNIT</scope>
</reference>
<reference key="3">
    <citation type="journal article" date="1999" name="EMBO J.">
        <title>Structure and mechanism of soluble quinoprotein glucose dehydrogenase.</title>
        <authorList>
            <person name="Oubrie A."/>
            <person name="Rozeboom H.J."/>
            <person name="Kalk K.H."/>
            <person name="Olsthoorn A.J.J."/>
            <person name="Duine J.A."/>
            <person name="Dijkstra B.W."/>
        </authorList>
    </citation>
    <scope>X-RAY CRYSTALLOGRAPHY (1.9 ANGSTROMS) IN COMPLEX WITH GLUCOSE; PQQ AND CALCIUM</scope>
    <scope>SUBUNIT</scope>
</reference>
<feature type="signal peptide">
    <location>
        <begin position="1"/>
        <end position="24"/>
    </location>
</feature>
<feature type="chain" id="PRO_0000025583" description="Quinoprotein glucose dehydrogenase B">
    <location>
        <begin position="25"/>
        <end position="478"/>
    </location>
</feature>
<feature type="region of interest" description="PQQ">
    <location>
        <begin position="252"/>
        <end position="253"/>
    </location>
</feature>
<feature type="region of interest" description="PQQ">
    <location>
        <begin position="430"/>
        <end position="432"/>
    </location>
</feature>
<feature type="active site" description="Proton acceptor">
    <location>
        <position position="168"/>
    </location>
</feature>
<feature type="binding site" evidence="2">
    <location>
        <position position="100"/>
    </location>
    <ligand>
        <name>D-glucose</name>
        <dbReference type="ChEBI" id="CHEBI:4167"/>
    </ligand>
</feature>
<feature type="binding site" evidence="2">
    <location>
        <position position="167"/>
    </location>
    <ligand>
        <name>D-glucose</name>
        <dbReference type="ChEBI" id="CHEBI:4167"/>
    </ligand>
</feature>
<feature type="binding site" evidence="2">
    <location>
        <position position="192"/>
    </location>
    <ligand>
        <name>D-glucose</name>
        <dbReference type="ChEBI" id="CHEBI:4167"/>
    </ligand>
</feature>
<feature type="binding site" evidence="2">
    <location>
        <position position="252"/>
    </location>
    <ligand>
        <name>D-glucose</name>
        <dbReference type="ChEBI" id="CHEBI:4167"/>
    </ligand>
</feature>
<feature type="binding site" evidence="2">
    <location>
        <position position="271"/>
    </location>
    <ligand>
        <name>Ca(2+)</name>
        <dbReference type="ChEBI" id="CHEBI:29108"/>
        <label>1</label>
    </ligand>
</feature>
<feature type="binding site" evidence="2">
    <location>
        <position position="272"/>
    </location>
    <ligand>
        <name>Ca(2+)</name>
        <dbReference type="ChEBI" id="CHEBI:29108"/>
        <label>1</label>
    </ligand>
</feature>
<feature type="binding site" evidence="2">
    <location>
        <position position="277"/>
    </location>
    <ligand>
        <name>Ca(2+)</name>
        <dbReference type="ChEBI" id="CHEBI:29108"/>
        <label>2</label>
    </ligand>
</feature>
<feature type="binding site" evidence="2">
    <location>
        <position position="287"/>
    </location>
    <ligand>
        <name>Ca(2+)</name>
        <dbReference type="ChEBI" id="CHEBI:29108"/>
        <label>2</label>
    </ligand>
</feature>
<feature type="binding site" evidence="2">
    <location>
        <position position="293"/>
    </location>
    <ligand>
        <name>Ca(2+)</name>
        <dbReference type="ChEBI" id="CHEBI:29108"/>
        <label>3</label>
    </ligand>
</feature>
<feature type="binding site" evidence="2">
    <location>
        <position position="295"/>
    </location>
    <ligand>
        <name>Ca(2+)</name>
        <dbReference type="ChEBI" id="CHEBI:29108"/>
        <label>3</label>
    </ligand>
</feature>
<feature type="binding site" evidence="2">
    <location>
        <position position="297"/>
    </location>
    <ligand>
        <name>Ca(2+)</name>
        <dbReference type="ChEBI" id="CHEBI:29108"/>
        <label>3</label>
    </ligand>
</feature>
<feature type="binding site" evidence="2">
    <location>
        <position position="333"/>
    </location>
    <ligand>
        <name>Ca(2+)</name>
        <dbReference type="ChEBI" id="CHEBI:29108"/>
        <label>3</label>
    </ligand>
</feature>
<feature type="binding site" evidence="2">
    <location>
        <position position="367"/>
    </location>
    <ligand>
        <name>pyrroloquinoline quinone</name>
        <dbReference type="ChEBI" id="CHEBI:58442"/>
    </ligand>
</feature>
<feature type="binding site" evidence="2">
    <location>
        <position position="372"/>
    </location>
    <ligand>
        <name>pyrroloquinoline quinone</name>
        <dbReference type="ChEBI" id="CHEBI:58442"/>
    </ligand>
</feature>
<feature type="binding site" evidence="2">
    <location>
        <position position="401"/>
    </location>
    <ligand>
        <name>pyrroloquinoline quinone</name>
        <dbReference type="ChEBI" id="CHEBI:58442"/>
    </ligand>
</feature>
<feature type="helix" evidence="5">
    <location>
        <begin position="30"/>
        <end position="34"/>
    </location>
</feature>
<feature type="strand" evidence="5">
    <location>
        <begin position="41"/>
        <end position="47"/>
    </location>
</feature>
<feature type="strand" evidence="5">
    <location>
        <begin position="51"/>
        <end position="58"/>
    </location>
</feature>
<feature type="strand" evidence="5">
    <location>
        <begin position="64"/>
        <end position="68"/>
    </location>
</feature>
<feature type="turn" evidence="5">
    <location>
        <begin position="69"/>
        <end position="71"/>
    </location>
</feature>
<feature type="strand" evidence="5">
    <location>
        <begin position="73"/>
        <end position="77"/>
    </location>
</feature>
<feature type="turn" evidence="5">
    <location>
        <begin position="79"/>
        <end position="81"/>
    </location>
</feature>
<feature type="strand" evidence="5">
    <location>
        <begin position="84"/>
        <end position="89"/>
    </location>
</feature>
<feature type="strand" evidence="5">
    <location>
        <begin position="102"/>
        <end position="108"/>
    </location>
</feature>
<feature type="turn" evidence="5">
    <location>
        <begin position="110"/>
        <end position="114"/>
    </location>
</feature>
<feature type="strand" evidence="5">
    <location>
        <begin position="117"/>
        <end position="125"/>
    </location>
</feature>
<feature type="strand" evidence="4">
    <location>
        <begin position="131"/>
        <end position="133"/>
    </location>
</feature>
<feature type="strand" evidence="5">
    <location>
        <begin position="136"/>
        <end position="146"/>
    </location>
</feature>
<feature type="turn" evidence="5">
    <location>
        <begin position="147"/>
        <end position="150"/>
    </location>
</feature>
<feature type="strand" evidence="5">
    <location>
        <begin position="151"/>
        <end position="162"/>
    </location>
</feature>
<feature type="strand" evidence="5">
    <location>
        <begin position="170"/>
        <end position="175"/>
    </location>
</feature>
<feature type="strand" evidence="5">
    <location>
        <begin position="181"/>
        <end position="185"/>
    </location>
</feature>
<feature type="turn" evidence="5">
    <location>
        <begin position="188"/>
        <end position="191"/>
    </location>
</feature>
<feature type="helix" evidence="5">
    <location>
        <begin position="193"/>
        <end position="195"/>
    </location>
</feature>
<feature type="helix" evidence="5">
    <location>
        <begin position="208"/>
        <end position="212"/>
    </location>
</feature>
<feature type="strand" evidence="5">
    <location>
        <begin position="220"/>
        <end position="226"/>
    </location>
</feature>
<feature type="strand" evidence="4">
    <location>
        <begin position="238"/>
        <end position="241"/>
    </location>
</feature>
<feature type="strand" evidence="5">
    <location>
        <begin position="245"/>
        <end position="249"/>
    </location>
</feature>
<feature type="strand" evidence="5">
    <location>
        <begin position="252"/>
        <end position="259"/>
    </location>
</feature>
<feature type="strand" evidence="5">
    <location>
        <begin position="265"/>
        <end position="270"/>
    </location>
</feature>
<feature type="strand" evidence="5">
    <location>
        <begin position="272"/>
        <end position="274"/>
    </location>
</feature>
<feature type="strand" evidence="5">
    <location>
        <begin position="276"/>
        <end position="280"/>
    </location>
</feature>
<feature type="turn" evidence="5">
    <location>
        <begin position="289"/>
        <end position="291"/>
    </location>
</feature>
<feature type="strand" evidence="5">
    <location>
        <begin position="293"/>
        <end position="297"/>
    </location>
</feature>
<feature type="helix" evidence="5">
    <location>
        <begin position="306"/>
        <end position="308"/>
    </location>
</feature>
<feature type="helix" evidence="5">
    <location>
        <begin position="333"/>
        <end position="335"/>
    </location>
</feature>
<feature type="strand" evidence="5">
    <location>
        <begin position="339"/>
        <end position="341"/>
    </location>
</feature>
<feature type="strand" evidence="5">
    <location>
        <begin position="345"/>
        <end position="348"/>
    </location>
</feature>
<feature type="helix" evidence="5">
    <location>
        <begin position="360"/>
        <end position="362"/>
    </location>
</feature>
<feature type="helix" evidence="5">
    <location>
        <begin position="366"/>
        <end position="369"/>
    </location>
</feature>
<feature type="strand" evidence="5">
    <location>
        <begin position="394"/>
        <end position="402"/>
    </location>
</feature>
<feature type="strand" evidence="5">
    <location>
        <begin position="405"/>
        <end position="410"/>
    </location>
</feature>
<feature type="strand" evidence="5">
    <location>
        <begin position="414"/>
        <end position="425"/>
    </location>
</feature>
<feature type="strand" evidence="5">
    <location>
        <begin position="431"/>
        <end position="436"/>
    </location>
</feature>
<feature type="strand" evidence="4">
    <location>
        <begin position="438"/>
        <end position="441"/>
    </location>
</feature>
<feature type="strand" evidence="5">
    <location>
        <begin position="443"/>
        <end position="447"/>
    </location>
</feature>
<feature type="strand" evidence="4">
    <location>
        <begin position="456"/>
        <end position="458"/>
    </location>
</feature>
<feature type="strand" evidence="5">
    <location>
        <begin position="470"/>
        <end position="475"/>
    </location>
</feature>
<gene>
    <name type="primary">gdhB</name>
</gene>
<protein>
    <recommendedName>
        <fullName>Quinoprotein glucose dehydrogenase B</fullName>
        <ecNumber>1.1.5.2</ecNumber>
    </recommendedName>
    <alternativeName>
        <fullName>Glucose dehydrogenase B [pyrroloquinoline-quinone]</fullName>
    </alternativeName>
    <alternativeName>
        <fullName>Soluble glucose dehydrogenase</fullName>
        <shortName>s-GDH</shortName>
    </alternativeName>
</protein>
<comment type="function">
    <text>Oxidizes glucose to gluconolactone.</text>
</comment>
<comment type="catalytic activity">
    <reaction>
        <text>a ubiquinone + D-glucose = D-glucono-1,5-lactone + a ubiquinol</text>
        <dbReference type="Rhea" id="RHEA:22152"/>
        <dbReference type="Rhea" id="RHEA-COMP:9565"/>
        <dbReference type="Rhea" id="RHEA-COMP:9566"/>
        <dbReference type="ChEBI" id="CHEBI:4167"/>
        <dbReference type="ChEBI" id="CHEBI:16217"/>
        <dbReference type="ChEBI" id="CHEBI:16389"/>
        <dbReference type="ChEBI" id="CHEBI:17976"/>
        <dbReference type="EC" id="1.1.5.2"/>
    </reaction>
</comment>
<comment type="cofactor">
    <cofactor>
        <name>pyrroloquinoline quinone</name>
        <dbReference type="ChEBI" id="CHEBI:58442"/>
    </cofactor>
    <text>Binds 1 PQQ group per subunit.</text>
</comment>
<comment type="cofactor">
    <cofactor>
        <name>Ca(2+)</name>
        <dbReference type="ChEBI" id="CHEBI:29108"/>
    </cofactor>
    <text>Binds 3 Ca(2+) ions per subunit.</text>
</comment>
<comment type="subunit">
    <text evidence="1 2">Homodimer.</text>
</comment>
<comment type="biotechnology">
    <text>Potent biocatalyst for the accurate in vivo monitoring of blood glucose in the management of diabetes.</text>
</comment>
<comment type="miscellaneous">
    <text>Acinetobacter calcoaceticus contains two different PQQ dependent enzymes with GDH activity. GDH-A prefers 2-deoxyglucose as substrate, the specific substrates for GDH-B are disaccharides.</text>
</comment>
<comment type="similarity">
    <text evidence="3">Belongs to the PQQ oxidoreductase GdhB family.</text>
</comment>
<dbReference type="EC" id="1.1.5.2"/>
<dbReference type="EMBL" id="X15871">
    <property type="protein sequence ID" value="CAA33881.1"/>
    <property type="molecule type" value="Genomic_DNA"/>
</dbReference>
<dbReference type="PIR" id="S04784">
    <property type="entry name" value="S04784"/>
</dbReference>
<dbReference type="PDB" id="1C9U">
    <property type="method" value="X-ray"/>
    <property type="resolution" value="2.20 A"/>
    <property type="chains" value="A/B=25-478"/>
</dbReference>
<dbReference type="PDB" id="1CQ1">
    <property type="method" value="X-ray"/>
    <property type="resolution" value="1.90 A"/>
    <property type="chains" value="A/B=25-478"/>
</dbReference>
<dbReference type="PDB" id="1CRU">
    <property type="method" value="X-ray"/>
    <property type="resolution" value="1.50 A"/>
    <property type="chains" value="A/B=25-478"/>
</dbReference>
<dbReference type="PDB" id="1QBI">
    <property type="method" value="X-ray"/>
    <property type="resolution" value="1.72 A"/>
    <property type="chains" value="A/B=25-478"/>
</dbReference>
<dbReference type="PDB" id="5MIN">
    <property type="method" value="X-ray"/>
    <property type="resolution" value="1.76 A"/>
    <property type="chains" value="A/B=25-477"/>
</dbReference>
<dbReference type="PDB" id="8RE0">
    <property type="method" value="X-ray"/>
    <property type="resolution" value="1.56 A"/>
    <property type="chains" value="A/B=25-478"/>
</dbReference>
<dbReference type="PDB" id="8RFK">
    <property type="method" value="X-ray"/>
    <property type="resolution" value="1.56 A"/>
    <property type="chains" value="A/B=25-478"/>
</dbReference>
<dbReference type="PDB" id="8RG1">
    <property type="method" value="X-ray"/>
    <property type="resolution" value="1.19 A"/>
    <property type="chains" value="A/B=25-478"/>
</dbReference>
<dbReference type="PDBsum" id="1C9U"/>
<dbReference type="PDBsum" id="1CQ1"/>
<dbReference type="PDBsum" id="1CRU"/>
<dbReference type="PDBsum" id="1QBI"/>
<dbReference type="PDBsum" id="5MIN"/>
<dbReference type="PDBsum" id="8RE0"/>
<dbReference type="PDBsum" id="8RFK"/>
<dbReference type="PDBsum" id="8RG1"/>
<dbReference type="SMR" id="P13650"/>
<dbReference type="STRING" id="471.BUM88_11175"/>
<dbReference type="DrugBank" id="DB02379">
    <property type="generic name" value="Beta-D-Glucose"/>
</dbReference>
<dbReference type="DrugBank" id="DB04361">
    <property type="generic name" value="Methyldiazene"/>
</dbReference>
<dbReference type="DrugBank" id="DB03205">
    <property type="generic name" value="Pyrroloquinoline Quinone"/>
</dbReference>
<dbReference type="BioCyc" id="MetaCyc:MONOMER-15518"/>
<dbReference type="BRENDA" id="1.1.5.2">
    <property type="organism ID" value="99"/>
</dbReference>
<dbReference type="BRENDA" id="1.1.99.35">
    <property type="organism ID" value="99"/>
</dbReference>
<dbReference type="EvolutionaryTrace" id="P13650"/>
<dbReference type="GO" id="GO:0046872">
    <property type="term" value="F:metal ion binding"/>
    <property type="evidence" value="ECO:0007669"/>
    <property type="project" value="UniProtKB-KW"/>
</dbReference>
<dbReference type="GO" id="GO:0008876">
    <property type="term" value="F:quinoprotein glucose dehydrogenase activity"/>
    <property type="evidence" value="ECO:0007669"/>
    <property type="project" value="UniProtKB-EC"/>
</dbReference>
<dbReference type="Gene3D" id="2.120.10.30">
    <property type="entry name" value="TolB, C-terminal domain"/>
    <property type="match status" value="1"/>
</dbReference>
<dbReference type="InterPro" id="IPR011042">
    <property type="entry name" value="6-blade_b-propeller_TolB-like"/>
</dbReference>
<dbReference type="InterPro" id="IPR012938">
    <property type="entry name" value="Glc/Sorbosone_DH"/>
</dbReference>
<dbReference type="InterPro" id="IPR011041">
    <property type="entry name" value="Quinoprot_gluc/sorb_DH_b-prop"/>
</dbReference>
<dbReference type="InterPro" id="IPR019893">
    <property type="entry name" value="SndH-like"/>
</dbReference>
<dbReference type="NCBIfam" id="TIGR03606">
    <property type="entry name" value="non_repeat_PQQ"/>
    <property type="match status" value="1"/>
</dbReference>
<dbReference type="PANTHER" id="PTHR19328">
    <property type="entry name" value="HEDGEHOG-INTERACTING PROTEIN"/>
    <property type="match status" value="1"/>
</dbReference>
<dbReference type="PANTHER" id="PTHR19328:SF13">
    <property type="entry name" value="HIPL1 PROTEIN"/>
    <property type="match status" value="1"/>
</dbReference>
<dbReference type="Pfam" id="PF07995">
    <property type="entry name" value="GSDH"/>
    <property type="match status" value="2"/>
</dbReference>
<dbReference type="SUPFAM" id="SSF50952">
    <property type="entry name" value="Soluble quinoprotein glucose dehydrogenase"/>
    <property type="match status" value="1"/>
</dbReference>
<accession>P13650</accession>
<keyword id="KW-0002">3D-structure</keyword>
<keyword id="KW-0106">Calcium</keyword>
<keyword id="KW-0479">Metal-binding</keyword>
<keyword id="KW-0560">Oxidoreductase</keyword>
<keyword id="KW-0634">PQQ</keyword>
<keyword id="KW-0732">Signal</keyword>
<sequence>MNKHLLAKIALLSAVQLVTLSAFADVPLTPSQFAKAKSENFDKKVILSNLNKPHALLWGPDNQIWLTERATGKILRVNPESGSVKTVFQVPEIVNDADGQNGLLGFAFHPDFKNNPYIYISGTFKNPKSTDKELPNQTIIRRYTYNKSTDTLEKPVDLLAGLPSSKDHQSGRLVIGPDQKIYYTIGDQGRNQLAYLFLPNQAQHTPTQQELNGKDYHTYMGKVLRLNLDGSIPKDNPSFNGVVSHIYTLGHRNPQGLAFTPNGKLLQSEQGPNSDDEINLIVKGGNYGWPNVAGYKDDSGYAYANYSAAANKSIKDLAQNGVKVAAGVPVTKESEWTGKNFVPPLKTLYTVQDTYNYNDPTCGEMTYICWPTVAPSSAYVYKGGKKAITGWENTLLVPSLKRGVIFRIKLDPTYSTTYDDAVPMFKSNNRYRDVIASPDGNVLYVLTDTAGNVQKDDGSVTNTLENPGSLIKFTYKAK</sequence>
<evidence type="ECO:0000269" key="1">
    <source>
    </source>
</evidence>
<evidence type="ECO:0000269" key="2">
    <source>
    </source>
</evidence>
<evidence type="ECO:0000305" key="3"/>
<evidence type="ECO:0007829" key="4">
    <source>
        <dbReference type="PDB" id="1C9U"/>
    </source>
</evidence>
<evidence type="ECO:0007829" key="5">
    <source>
        <dbReference type="PDB" id="1CRU"/>
    </source>
</evidence>